<comment type="function">
    <text evidence="2">Effector that is involved in host plant infection. Contributes to virulence during the early infection stage, by inhibiting plant defense responses induced by both PAMP-triggered immunity (PTI) and effector-triggered immunity (ETI).</text>
</comment>
<comment type="subcellular location">
    <subcellularLocation>
        <location evidence="5">Secreted</location>
    </subcellularLocation>
    <subcellularLocation>
        <location evidence="5">Host cell</location>
    </subcellularLocation>
</comment>
<comment type="induction">
    <text evidence="2">Expression is induced during host plant infection.</text>
</comment>
<comment type="domain">
    <text evidence="5">The RxLR-dEER motif acts to carry the protein into the host cell cytoplasm through binding to cell surface phosphatidylinositol-3-phosphate.</text>
</comment>
<comment type="similarity">
    <text evidence="4">Belongs to the RxLR effector family.</text>
</comment>
<proteinExistence type="evidence at transcript level"/>
<accession>D0N8F5</accession>
<dbReference type="EMBL" id="DS028128">
    <property type="protein sequence ID" value="EEY53840.1"/>
    <property type="molecule type" value="Genomic_DNA"/>
</dbReference>
<dbReference type="RefSeq" id="XP_002904471.1">
    <property type="nucleotide sequence ID" value="XM_002904425.1"/>
</dbReference>
<dbReference type="STRING" id="403677.D0N8F5"/>
<dbReference type="EnsemblProtists" id="PITG_07451T0">
    <property type="protein sequence ID" value="PITG_07451T0"/>
    <property type="gene ID" value="PITG_07451"/>
</dbReference>
<dbReference type="GeneID" id="9465678"/>
<dbReference type="KEGG" id="pif:PITG_07451"/>
<dbReference type="VEuPathDB" id="FungiDB:PITG_07451"/>
<dbReference type="eggNOG" id="ENOG502RGN3">
    <property type="taxonomic scope" value="Eukaryota"/>
</dbReference>
<dbReference type="HOGENOM" id="CLU_161018_0_0_1"/>
<dbReference type="InParanoid" id="D0N8F5"/>
<dbReference type="OMA" id="IRTGMAN"/>
<dbReference type="OrthoDB" id="118288at2759"/>
<dbReference type="Proteomes" id="UP000006643">
    <property type="component" value="Partially assembled WGS sequence"/>
</dbReference>
<dbReference type="GO" id="GO:0005576">
    <property type="term" value="C:extracellular region"/>
    <property type="evidence" value="ECO:0007669"/>
    <property type="project" value="UniProtKB-SubCell"/>
</dbReference>
<dbReference type="GO" id="GO:0043657">
    <property type="term" value="C:host cell"/>
    <property type="evidence" value="ECO:0007669"/>
    <property type="project" value="UniProtKB-SubCell"/>
</dbReference>
<organism>
    <name type="scientific">Phytophthora infestans (strain T30-4)</name>
    <name type="common">Potato late blight agent</name>
    <dbReference type="NCBI Taxonomy" id="403677"/>
    <lineage>
        <taxon>Eukaryota</taxon>
        <taxon>Sar</taxon>
        <taxon>Stramenopiles</taxon>
        <taxon>Oomycota</taxon>
        <taxon>Peronosporales</taxon>
        <taxon>Peronosporaceae</taxon>
        <taxon>Phytophthora</taxon>
    </lineage>
</organism>
<reference key="1">
    <citation type="journal article" date="2009" name="Nature">
        <title>Genome sequence and analysis of the Irish potato famine pathogen Phytophthora infestans.</title>
        <authorList>
            <consortium name="The Broad Institute Genome Sequencing Platform"/>
            <person name="Haas B.J."/>
            <person name="Kamoun S."/>
            <person name="Zody M.C."/>
            <person name="Jiang R.H."/>
            <person name="Handsaker R.E."/>
            <person name="Cano L.M."/>
            <person name="Grabherr M."/>
            <person name="Kodira C.D."/>
            <person name="Raffaele S."/>
            <person name="Torto-Alalibo T."/>
            <person name="Bozkurt T.O."/>
            <person name="Ah-Fong A.M."/>
            <person name="Alvarado L."/>
            <person name="Anderson V.L."/>
            <person name="Armstrong M.R."/>
            <person name="Avrova A."/>
            <person name="Baxter L."/>
            <person name="Beynon J."/>
            <person name="Boevink P.C."/>
            <person name="Bollmann S.R."/>
            <person name="Bos J.I."/>
            <person name="Bulone V."/>
            <person name="Cai G."/>
            <person name="Cakir C."/>
            <person name="Carrington J.C."/>
            <person name="Chawner M."/>
            <person name="Conti L."/>
            <person name="Costanzo S."/>
            <person name="Ewan R."/>
            <person name="Fahlgren N."/>
            <person name="Fischbach M.A."/>
            <person name="Fugelstad J."/>
            <person name="Gilroy E.M."/>
            <person name="Gnerre S."/>
            <person name="Green P.J."/>
            <person name="Grenville-Briggs L.J."/>
            <person name="Griffith J."/>
            <person name="Grunwald N.J."/>
            <person name="Horn K."/>
            <person name="Horner N.R."/>
            <person name="Hu C.H."/>
            <person name="Huitema E."/>
            <person name="Jeong D.H."/>
            <person name="Jones A.M."/>
            <person name="Jones J.D."/>
            <person name="Jones R.W."/>
            <person name="Karlsson E.K."/>
            <person name="Kunjeti S.G."/>
            <person name="Lamour K."/>
            <person name="Liu Z."/>
            <person name="Ma L."/>
            <person name="Maclean D."/>
            <person name="Chibucos M.C."/>
            <person name="McDonald H."/>
            <person name="McWalters J."/>
            <person name="Meijer H.J."/>
            <person name="Morgan W."/>
            <person name="Morris P.F."/>
            <person name="Munro C.A."/>
            <person name="O'Neill K."/>
            <person name="Ospina-Giraldo M."/>
            <person name="Pinzon A."/>
            <person name="Pritchard L."/>
            <person name="Ramsahoye B."/>
            <person name="Ren Q."/>
            <person name="Restrepo S."/>
            <person name="Roy S."/>
            <person name="Sadanandom A."/>
            <person name="Savidor A."/>
            <person name="Schornack S."/>
            <person name="Schwartz D.C."/>
            <person name="Schumann U.D."/>
            <person name="Schwessinger B."/>
            <person name="Seyer L."/>
            <person name="Sharpe T."/>
            <person name="Silvar C."/>
            <person name="Song J."/>
            <person name="Studholme D.J."/>
            <person name="Sykes S."/>
            <person name="Thines M."/>
            <person name="van de Vondervoort P.J."/>
            <person name="Phuntumart V."/>
            <person name="Wawra S."/>
            <person name="Weide R."/>
            <person name="Win J."/>
            <person name="Young C."/>
            <person name="Zhou S."/>
            <person name="Fry W."/>
            <person name="Meyers B.C."/>
            <person name="van West P."/>
            <person name="Ristaino J."/>
            <person name="Govers F."/>
            <person name="Birch P.R."/>
            <person name="Whisson S.C."/>
            <person name="Judelson H.S."/>
            <person name="Nusbaum C."/>
        </authorList>
    </citation>
    <scope>NUCLEOTIDE SEQUENCE [LARGE SCALE GENOMIC DNA]</scope>
    <source>
        <strain>T30-4</strain>
    </source>
</reference>
<reference key="2">
    <citation type="journal article" date="2017" name="Front. Plant Sci.">
        <title>Conserved RXLR effector genes of Phytophthora infestans expressed at the early stage of potato infection are suppressive to host defense.</title>
        <authorList>
            <person name="Yin J."/>
            <person name="Gu B."/>
            <person name="Huang G."/>
            <person name="Tian Y."/>
            <person name="Quan J."/>
            <person name="Lindqvist-Kreuze H."/>
            <person name="Shan W."/>
        </authorList>
    </citation>
    <scope>INDUCTION</scope>
    <scope>DOMAIN</scope>
    <scope>FUNCTION</scope>
</reference>
<protein>
    <recommendedName>
        <fullName evidence="3">RxLR effector protein CRE6</fullName>
    </recommendedName>
    <alternativeName>
        <fullName evidence="3">Core RXLR effector 6</fullName>
    </alternativeName>
</protein>
<gene>
    <name evidence="3" type="primary">CRE6</name>
    <name type="ORF">PITG_07451</name>
</gene>
<keyword id="KW-1185">Reference proteome</keyword>
<keyword id="KW-0964">Secreted</keyword>
<keyword id="KW-0732">Signal</keyword>
<keyword id="KW-0843">Virulence</keyword>
<evidence type="ECO:0000255" key="1"/>
<evidence type="ECO:0000269" key="2">
    <source>
    </source>
</evidence>
<evidence type="ECO:0000303" key="3">
    <source>
    </source>
</evidence>
<evidence type="ECO:0000305" key="4"/>
<evidence type="ECO:0000305" key="5">
    <source>
    </source>
</evidence>
<feature type="signal peptide" evidence="1">
    <location>
        <begin position="1"/>
        <end position="19"/>
    </location>
</feature>
<feature type="chain" id="PRO_5003011777" description="RxLR effector protein CRE6">
    <location>
        <begin position="20"/>
        <end position="127"/>
    </location>
</feature>
<feature type="short sequence motif" description="RxLR-dEER" evidence="5">
    <location>
        <begin position="48"/>
        <end position="67"/>
    </location>
</feature>
<name>CRE6_PHYIT</name>
<sequence length="127" mass="14115">MIRNALLVLVFVLIGTISAATDADMTTDSGKQPSNINQLTLVSPEGKRLLRQGSVKEGGVHDATEERAFIVTPLKNSLYRILAAFGLKPQTLYVQLGIRTGMANALYNRLYHSYHRWYATYGPRVYG</sequence>